<proteinExistence type="inferred from homology"/>
<name>DCYD2_ORYSJ</name>
<protein>
    <recommendedName>
        <fullName>Putative D-cysteine desulfhydrase 2, mitochondrial</fullName>
        <ecNumber>4.4.1.15</ecNumber>
    </recommendedName>
    <alternativeName>
        <fullName>OsD-CDes2</fullName>
        <shortName>D-CDes2</shortName>
    </alternativeName>
</protein>
<reference key="1">
    <citation type="journal article" date="2002" name="Nature">
        <title>The genome sequence and structure of rice chromosome 1.</title>
        <authorList>
            <person name="Sasaki T."/>
            <person name="Matsumoto T."/>
            <person name="Yamamoto K."/>
            <person name="Sakata K."/>
            <person name="Baba T."/>
            <person name="Katayose Y."/>
            <person name="Wu J."/>
            <person name="Niimura Y."/>
            <person name="Cheng Z."/>
            <person name="Nagamura Y."/>
            <person name="Antonio B.A."/>
            <person name="Kanamori H."/>
            <person name="Hosokawa S."/>
            <person name="Masukawa M."/>
            <person name="Arikawa K."/>
            <person name="Chiden Y."/>
            <person name="Hayashi M."/>
            <person name="Okamoto M."/>
            <person name="Ando T."/>
            <person name="Aoki H."/>
            <person name="Arita K."/>
            <person name="Hamada M."/>
            <person name="Harada C."/>
            <person name="Hijishita S."/>
            <person name="Honda M."/>
            <person name="Ichikawa Y."/>
            <person name="Idonuma A."/>
            <person name="Iijima M."/>
            <person name="Ikeda M."/>
            <person name="Ikeno M."/>
            <person name="Ito S."/>
            <person name="Ito T."/>
            <person name="Ito Y."/>
            <person name="Ito Y."/>
            <person name="Iwabuchi A."/>
            <person name="Kamiya K."/>
            <person name="Karasawa W."/>
            <person name="Katagiri S."/>
            <person name="Kikuta A."/>
            <person name="Kobayashi N."/>
            <person name="Kono I."/>
            <person name="Machita K."/>
            <person name="Maehara T."/>
            <person name="Mizuno H."/>
            <person name="Mizubayashi T."/>
            <person name="Mukai Y."/>
            <person name="Nagasaki H."/>
            <person name="Nakashima M."/>
            <person name="Nakama Y."/>
            <person name="Nakamichi Y."/>
            <person name="Nakamura M."/>
            <person name="Namiki N."/>
            <person name="Negishi M."/>
            <person name="Ohta I."/>
            <person name="Ono N."/>
            <person name="Saji S."/>
            <person name="Sakai K."/>
            <person name="Shibata M."/>
            <person name="Shimokawa T."/>
            <person name="Shomura A."/>
            <person name="Song J."/>
            <person name="Takazaki Y."/>
            <person name="Terasawa K."/>
            <person name="Tsuji K."/>
            <person name="Waki K."/>
            <person name="Yamagata H."/>
            <person name="Yamane H."/>
            <person name="Yoshiki S."/>
            <person name="Yoshihara R."/>
            <person name="Yukawa K."/>
            <person name="Zhong H."/>
            <person name="Iwama H."/>
            <person name="Endo T."/>
            <person name="Ito H."/>
            <person name="Hahn J.H."/>
            <person name="Kim H.-I."/>
            <person name="Eun M.-Y."/>
            <person name="Yano M."/>
            <person name="Jiang J."/>
            <person name="Gojobori T."/>
        </authorList>
    </citation>
    <scope>NUCLEOTIDE SEQUENCE [LARGE SCALE GENOMIC DNA]</scope>
    <source>
        <strain>cv. Nipponbare</strain>
    </source>
</reference>
<reference key="2">
    <citation type="journal article" date="2005" name="Nature">
        <title>The map-based sequence of the rice genome.</title>
        <authorList>
            <consortium name="International rice genome sequencing project (IRGSP)"/>
        </authorList>
    </citation>
    <scope>NUCLEOTIDE SEQUENCE [LARGE SCALE GENOMIC DNA]</scope>
    <source>
        <strain>cv. Nipponbare</strain>
    </source>
</reference>
<reference key="3">
    <citation type="journal article" date="2008" name="Nucleic Acids Res.">
        <title>The rice annotation project database (RAP-DB): 2008 update.</title>
        <authorList>
            <consortium name="The rice annotation project (RAP)"/>
        </authorList>
    </citation>
    <scope>GENOME REANNOTATION</scope>
    <source>
        <strain>cv. Nipponbare</strain>
    </source>
</reference>
<reference key="4">
    <citation type="journal article" date="2013" name="Rice">
        <title>Improvement of the Oryza sativa Nipponbare reference genome using next generation sequence and optical map data.</title>
        <authorList>
            <person name="Kawahara Y."/>
            <person name="de la Bastide M."/>
            <person name="Hamilton J.P."/>
            <person name="Kanamori H."/>
            <person name="McCombie W.R."/>
            <person name="Ouyang S."/>
            <person name="Schwartz D.C."/>
            <person name="Tanaka T."/>
            <person name="Wu J."/>
            <person name="Zhou S."/>
            <person name="Childs K.L."/>
            <person name="Davidson R.M."/>
            <person name="Lin H."/>
            <person name="Quesada-Ocampo L."/>
            <person name="Vaillancourt B."/>
            <person name="Sakai H."/>
            <person name="Lee S.S."/>
            <person name="Kim J."/>
            <person name="Numa H."/>
            <person name="Itoh T."/>
            <person name="Buell C.R."/>
            <person name="Matsumoto T."/>
        </authorList>
    </citation>
    <scope>GENOME REANNOTATION</scope>
    <source>
        <strain>cv. Nipponbare</strain>
    </source>
</reference>
<reference key="5">
    <citation type="journal article" date="2005" name="PLoS Biol.">
        <title>The genomes of Oryza sativa: a history of duplications.</title>
        <authorList>
            <person name="Yu J."/>
            <person name="Wang J."/>
            <person name="Lin W."/>
            <person name="Li S."/>
            <person name="Li H."/>
            <person name="Zhou J."/>
            <person name="Ni P."/>
            <person name="Dong W."/>
            <person name="Hu S."/>
            <person name="Zeng C."/>
            <person name="Zhang J."/>
            <person name="Zhang Y."/>
            <person name="Li R."/>
            <person name="Xu Z."/>
            <person name="Li S."/>
            <person name="Li X."/>
            <person name="Zheng H."/>
            <person name="Cong L."/>
            <person name="Lin L."/>
            <person name="Yin J."/>
            <person name="Geng J."/>
            <person name="Li G."/>
            <person name="Shi J."/>
            <person name="Liu J."/>
            <person name="Lv H."/>
            <person name="Li J."/>
            <person name="Wang J."/>
            <person name="Deng Y."/>
            <person name="Ran L."/>
            <person name="Shi X."/>
            <person name="Wang X."/>
            <person name="Wu Q."/>
            <person name="Li C."/>
            <person name="Ren X."/>
            <person name="Wang J."/>
            <person name="Wang X."/>
            <person name="Li D."/>
            <person name="Liu D."/>
            <person name="Zhang X."/>
            <person name="Ji Z."/>
            <person name="Zhao W."/>
            <person name="Sun Y."/>
            <person name="Zhang Z."/>
            <person name="Bao J."/>
            <person name="Han Y."/>
            <person name="Dong L."/>
            <person name="Ji J."/>
            <person name="Chen P."/>
            <person name="Wu S."/>
            <person name="Liu J."/>
            <person name="Xiao Y."/>
            <person name="Bu D."/>
            <person name="Tan J."/>
            <person name="Yang L."/>
            <person name="Ye C."/>
            <person name="Zhang J."/>
            <person name="Xu J."/>
            <person name="Zhou Y."/>
            <person name="Yu Y."/>
            <person name="Zhang B."/>
            <person name="Zhuang S."/>
            <person name="Wei H."/>
            <person name="Liu B."/>
            <person name="Lei M."/>
            <person name="Yu H."/>
            <person name="Li Y."/>
            <person name="Xu H."/>
            <person name="Wei S."/>
            <person name="He X."/>
            <person name="Fang L."/>
            <person name="Zhang Z."/>
            <person name="Zhang Y."/>
            <person name="Huang X."/>
            <person name="Su Z."/>
            <person name="Tong W."/>
            <person name="Li J."/>
            <person name="Tong Z."/>
            <person name="Li S."/>
            <person name="Ye J."/>
            <person name="Wang L."/>
            <person name="Fang L."/>
            <person name="Lei T."/>
            <person name="Chen C.-S."/>
            <person name="Chen H.-C."/>
            <person name="Xu Z."/>
            <person name="Li H."/>
            <person name="Huang H."/>
            <person name="Zhang F."/>
            <person name="Xu H."/>
            <person name="Li N."/>
            <person name="Zhao C."/>
            <person name="Li S."/>
            <person name="Dong L."/>
            <person name="Huang Y."/>
            <person name="Li L."/>
            <person name="Xi Y."/>
            <person name="Qi Q."/>
            <person name="Li W."/>
            <person name="Zhang B."/>
            <person name="Hu W."/>
            <person name="Zhang Y."/>
            <person name="Tian X."/>
            <person name="Jiao Y."/>
            <person name="Liang X."/>
            <person name="Jin J."/>
            <person name="Gao L."/>
            <person name="Zheng W."/>
            <person name="Hao B."/>
            <person name="Liu S.-M."/>
            <person name="Wang W."/>
            <person name="Yuan L."/>
            <person name="Cao M."/>
            <person name="McDermott J."/>
            <person name="Samudrala R."/>
            <person name="Wang J."/>
            <person name="Wong G.K.-S."/>
            <person name="Yang H."/>
        </authorList>
    </citation>
    <scope>NUCLEOTIDE SEQUENCE [LARGE SCALE GENOMIC DNA]</scope>
    <source>
        <strain>cv. Nipponbare</strain>
    </source>
</reference>
<sequence length="407" mass="44466">MRPSPALAGGGRTVANLLSATEWMLPSPATQVHTISVLPSHSPPSPPHHFAFSNLTTAPKRNGGKGEEEGRPRFEVVRDDLLHPLANGNKARKLDALLPLLRRRGATDVVTCGGCQSAHAAATAVHCAEWGMRPHILLRGEQPDIPTGYNLISLMFGNVAYASRSVYAHRDEMLYNHARKVAGTGGTVLWADDISKEDFVLDEDNGCEIGSRRVVIIKEGAGDVQALLGVIRLVEYLYNLSSFHKHENVHVVVDAGTGTTAVGLALGAVCLGLHWRVTAVMLADTLERYKEREKSLISDFKKLCHNNYHEMVGENDIGDSLVEWVERFSPRRFGKVLNGEIALCRQIAQQTGILLDPMYTLAGWEQAVDLCVGDSRTKVVMIHTGGTLGFCGLAQRYSSHFTSDEQT</sequence>
<accession>B9EYZ1</accession>
<accession>Q5N9P5</accession>
<evidence type="ECO:0000250" key="1"/>
<evidence type="ECO:0000255" key="2"/>
<evidence type="ECO:0000256" key="3">
    <source>
        <dbReference type="SAM" id="MobiDB-lite"/>
    </source>
</evidence>
<evidence type="ECO:0000305" key="4"/>
<comment type="function">
    <text>Catalyzes the production of hydrogen sulfide (H2S) from cysteine.</text>
</comment>
<comment type="catalytic activity">
    <reaction>
        <text>D-cysteine + H2O = hydrogen sulfide + pyruvate + NH4(+) + H(+)</text>
        <dbReference type="Rhea" id="RHEA:11268"/>
        <dbReference type="ChEBI" id="CHEBI:15361"/>
        <dbReference type="ChEBI" id="CHEBI:15377"/>
        <dbReference type="ChEBI" id="CHEBI:15378"/>
        <dbReference type="ChEBI" id="CHEBI:28938"/>
        <dbReference type="ChEBI" id="CHEBI:29919"/>
        <dbReference type="ChEBI" id="CHEBI:35236"/>
        <dbReference type="EC" id="4.4.1.15"/>
    </reaction>
</comment>
<comment type="cofactor">
    <cofactor>
        <name>pyridoxal 5'-phosphate</name>
        <dbReference type="ChEBI" id="CHEBI:597326"/>
    </cofactor>
</comment>
<comment type="subcellular location">
    <subcellularLocation>
        <location evidence="1">Mitochondrion</location>
    </subcellularLocation>
</comment>
<comment type="similarity">
    <text evidence="4">Belongs to the ACC deaminase/D-cysteine desulfhydrase family.</text>
</comment>
<comment type="sequence caution" evidence="4">
    <conflict type="erroneous gene model prediction">
        <sequence resource="EMBL-CDS" id="BAD81811"/>
    </conflict>
</comment>
<dbReference type="EC" id="4.4.1.15"/>
<dbReference type="EMBL" id="AP003248">
    <property type="protein sequence ID" value="BAD81811.1"/>
    <property type="status" value="ALT_SEQ"/>
    <property type="molecule type" value="Genomic_DNA"/>
</dbReference>
<dbReference type="EMBL" id="AP008207">
    <property type="status" value="NOT_ANNOTATED_CDS"/>
    <property type="molecule type" value="Genomic_DNA"/>
</dbReference>
<dbReference type="EMBL" id="AP014957">
    <property type="status" value="NOT_ANNOTATED_CDS"/>
    <property type="molecule type" value="Genomic_DNA"/>
</dbReference>
<dbReference type="EMBL" id="CM000138">
    <property type="protein sequence ID" value="EEE55235.1"/>
    <property type="molecule type" value="Genomic_DNA"/>
</dbReference>
<dbReference type="SMR" id="B9EYZ1"/>
<dbReference type="FunCoup" id="B9EYZ1">
    <property type="interactions" value="1536"/>
</dbReference>
<dbReference type="STRING" id="39947.B9EYZ1"/>
<dbReference type="PaxDb" id="39947-B9EYZ1"/>
<dbReference type="GeneID" id="9270375"/>
<dbReference type="KEGG" id="osa:9270375"/>
<dbReference type="eggNOG" id="ENOG502QPSP">
    <property type="taxonomic scope" value="Eukaryota"/>
</dbReference>
<dbReference type="InParanoid" id="B9EYZ1"/>
<dbReference type="OrthoDB" id="10266364at2759"/>
<dbReference type="Proteomes" id="UP000000763">
    <property type="component" value="Chromosome 1"/>
</dbReference>
<dbReference type="Proteomes" id="UP000007752">
    <property type="component" value="Chromosome 1"/>
</dbReference>
<dbReference type="Proteomes" id="UP000059680">
    <property type="component" value="Chromosome 1"/>
</dbReference>
<dbReference type="GO" id="GO:0005739">
    <property type="term" value="C:mitochondrion"/>
    <property type="evidence" value="ECO:0007669"/>
    <property type="project" value="UniProtKB-SubCell"/>
</dbReference>
<dbReference type="GO" id="GO:0019148">
    <property type="term" value="F:D-cysteine desulfhydrase activity"/>
    <property type="evidence" value="ECO:0000318"/>
    <property type="project" value="GO_Central"/>
</dbReference>
<dbReference type="FunFam" id="3.40.50.1100:FF:000081">
    <property type="entry name" value="D-cysteine desulfhydrase 2 mitochondrial"/>
    <property type="match status" value="1"/>
</dbReference>
<dbReference type="FunFam" id="3.40.50.1100:FF:000050">
    <property type="entry name" value="D-cysteine desulfhydrase 2, mitochondrial"/>
    <property type="match status" value="1"/>
</dbReference>
<dbReference type="Gene3D" id="3.40.50.1100">
    <property type="match status" value="2"/>
</dbReference>
<dbReference type="InterPro" id="IPR027278">
    <property type="entry name" value="ACCD_DCysDesulf"/>
</dbReference>
<dbReference type="InterPro" id="IPR036052">
    <property type="entry name" value="TrpB-like_PALP_sf"/>
</dbReference>
<dbReference type="PANTHER" id="PTHR43780">
    <property type="entry name" value="1-AMINOCYCLOPROPANE-1-CARBOXYLATE DEAMINASE-RELATED"/>
    <property type="match status" value="1"/>
</dbReference>
<dbReference type="PANTHER" id="PTHR43780:SF7">
    <property type="entry name" value="D-CYSTEINE DESULFHYDRASE 2, MITOCHONDRIAL"/>
    <property type="match status" value="1"/>
</dbReference>
<dbReference type="PIRSF" id="PIRSF006278">
    <property type="entry name" value="ACCD_DCysDesulf"/>
    <property type="match status" value="1"/>
</dbReference>
<dbReference type="SUPFAM" id="SSF53686">
    <property type="entry name" value="Tryptophan synthase beta subunit-like PLP-dependent enzymes"/>
    <property type="match status" value="1"/>
</dbReference>
<keyword id="KW-0456">Lyase</keyword>
<keyword id="KW-0496">Mitochondrion</keyword>
<keyword id="KW-0663">Pyridoxal phosphate</keyword>
<keyword id="KW-1185">Reference proteome</keyword>
<keyword id="KW-0809">Transit peptide</keyword>
<feature type="transit peptide" description="Mitochondrion" evidence="2">
    <location>
        <begin position="1"/>
        <end position="34"/>
    </location>
</feature>
<feature type="chain" id="PRO_0000429503" description="Putative D-cysteine desulfhydrase 2, mitochondrial">
    <location>
        <begin position="35"/>
        <end position="407"/>
    </location>
</feature>
<feature type="region of interest" description="Disordered" evidence="3">
    <location>
        <begin position="39"/>
        <end position="72"/>
    </location>
</feature>
<feature type="modified residue" description="N6-(pyridoxal phosphate)lysine" evidence="1">
    <location>
        <position position="90"/>
    </location>
</feature>
<gene>
    <name type="ordered locus">Os01g0695600</name>
    <name type="ordered locus">LOC_Os01g50060</name>
    <name type="ORF">OsJ_03112</name>
    <name type="ORF">P0431H09.32</name>
</gene>
<organism>
    <name type="scientific">Oryza sativa subsp. japonica</name>
    <name type="common">Rice</name>
    <dbReference type="NCBI Taxonomy" id="39947"/>
    <lineage>
        <taxon>Eukaryota</taxon>
        <taxon>Viridiplantae</taxon>
        <taxon>Streptophyta</taxon>
        <taxon>Embryophyta</taxon>
        <taxon>Tracheophyta</taxon>
        <taxon>Spermatophyta</taxon>
        <taxon>Magnoliopsida</taxon>
        <taxon>Liliopsida</taxon>
        <taxon>Poales</taxon>
        <taxon>Poaceae</taxon>
        <taxon>BOP clade</taxon>
        <taxon>Oryzoideae</taxon>
        <taxon>Oryzeae</taxon>
        <taxon>Oryzinae</taxon>
        <taxon>Oryza</taxon>
        <taxon>Oryza sativa</taxon>
    </lineage>
</organism>